<reference key="1">
    <citation type="submission" date="2008-10" db="EMBL/GenBank/DDBJ databases">
        <title>Genome sequence of Bacillus cereus B4264.</title>
        <authorList>
            <person name="Dodson R.J."/>
            <person name="Durkin A.S."/>
            <person name="Rosovitz M.J."/>
            <person name="Rasko D.A."/>
            <person name="Hoffmaster A."/>
            <person name="Ravel J."/>
            <person name="Sutton G."/>
        </authorList>
    </citation>
    <scope>NUCLEOTIDE SEQUENCE [LARGE SCALE GENOMIC DNA]</scope>
    <source>
        <strain>B4264</strain>
    </source>
</reference>
<evidence type="ECO:0000255" key="1">
    <source>
        <dbReference type="HAMAP-Rule" id="MF_00236"/>
    </source>
</evidence>
<dbReference type="EMBL" id="CP001176">
    <property type="protein sequence ID" value="ACK59430.1"/>
    <property type="molecule type" value="Genomic_DNA"/>
</dbReference>
<dbReference type="RefSeq" id="WP_000492443.1">
    <property type="nucleotide sequence ID" value="NZ_VEHB01000001.1"/>
</dbReference>
<dbReference type="SMR" id="B7H502"/>
<dbReference type="KEGG" id="bcb:BCB4264_A2225"/>
<dbReference type="HOGENOM" id="CLU_086034_6_0_9"/>
<dbReference type="Proteomes" id="UP000007096">
    <property type="component" value="Chromosome"/>
</dbReference>
<dbReference type="GO" id="GO:0033281">
    <property type="term" value="C:TAT protein transport complex"/>
    <property type="evidence" value="ECO:0007669"/>
    <property type="project" value="UniProtKB-UniRule"/>
</dbReference>
<dbReference type="GO" id="GO:0008320">
    <property type="term" value="F:protein transmembrane transporter activity"/>
    <property type="evidence" value="ECO:0007669"/>
    <property type="project" value="UniProtKB-UniRule"/>
</dbReference>
<dbReference type="GO" id="GO:0043953">
    <property type="term" value="P:protein transport by the Tat complex"/>
    <property type="evidence" value="ECO:0007669"/>
    <property type="project" value="UniProtKB-UniRule"/>
</dbReference>
<dbReference type="Gene3D" id="1.20.5.3310">
    <property type="match status" value="1"/>
</dbReference>
<dbReference type="HAMAP" id="MF_00236">
    <property type="entry name" value="TatA_E"/>
    <property type="match status" value="1"/>
</dbReference>
<dbReference type="InterPro" id="IPR003369">
    <property type="entry name" value="TatA/B/E"/>
</dbReference>
<dbReference type="InterPro" id="IPR006312">
    <property type="entry name" value="TatA/E"/>
</dbReference>
<dbReference type="NCBIfam" id="NF011430">
    <property type="entry name" value="PRK14861.1"/>
    <property type="match status" value="1"/>
</dbReference>
<dbReference type="NCBIfam" id="TIGR01411">
    <property type="entry name" value="tatAE"/>
    <property type="match status" value="1"/>
</dbReference>
<dbReference type="PANTHER" id="PTHR42982">
    <property type="entry name" value="SEC-INDEPENDENT PROTEIN TRANSLOCASE PROTEIN TATA"/>
    <property type="match status" value="1"/>
</dbReference>
<dbReference type="PANTHER" id="PTHR42982:SF1">
    <property type="entry name" value="SEC-INDEPENDENT PROTEIN TRANSLOCASE PROTEIN TATA"/>
    <property type="match status" value="1"/>
</dbReference>
<dbReference type="Pfam" id="PF02416">
    <property type="entry name" value="TatA_B_E"/>
    <property type="match status" value="1"/>
</dbReference>
<dbReference type="PRINTS" id="PR01506">
    <property type="entry name" value="TATBPROTEIN"/>
</dbReference>
<accession>B7H502</accession>
<protein>
    <recommendedName>
        <fullName evidence="1">Sec-independent protein translocase protein TatA</fullName>
    </recommendedName>
</protein>
<sequence length="61" mass="6852">MFSNIGFPGLILILVAVLILFGPKKLPEIGKALGETLKEFKKSTKELTDDAFQEKEKKEKM</sequence>
<comment type="function">
    <text evidence="1">Part of the twin-arginine translocation (Tat) system that transports large folded proteins containing a characteristic twin-arginine motif in their signal peptide across membranes. TatA could form the protein-conducting channel of the Tat system.</text>
</comment>
<comment type="subunit">
    <text evidence="1">Forms a complex with TatC.</text>
</comment>
<comment type="subcellular location">
    <subcellularLocation>
        <location evidence="1">Cell membrane</location>
        <topology evidence="1">Single-pass membrane protein</topology>
    </subcellularLocation>
</comment>
<comment type="similarity">
    <text evidence="1">Belongs to the TatA/E family.</text>
</comment>
<feature type="chain" id="PRO_1000125191" description="Sec-independent protein translocase protein TatA">
    <location>
        <begin position="1"/>
        <end position="61"/>
    </location>
</feature>
<feature type="transmembrane region" description="Helical" evidence="1">
    <location>
        <begin position="1"/>
        <end position="21"/>
    </location>
</feature>
<keyword id="KW-1003">Cell membrane</keyword>
<keyword id="KW-0472">Membrane</keyword>
<keyword id="KW-0653">Protein transport</keyword>
<keyword id="KW-0811">Translocation</keyword>
<keyword id="KW-0812">Transmembrane</keyword>
<keyword id="KW-1133">Transmembrane helix</keyword>
<keyword id="KW-0813">Transport</keyword>
<organism>
    <name type="scientific">Bacillus cereus (strain B4264)</name>
    <dbReference type="NCBI Taxonomy" id="405532"/>
    <lineage>
        <taxon>Bacteria</taxon>
        <taxon>Bacillati</taxon>
        <taxon>Bacillota</taxon>
        <taxon>Bacilli</taxon>
        <taxon>Bacillales</taxon>
        <taxon>Bacillaceae</taxon>
        <taxon>Bacillus</taxon>
        <taxon>Bacillus cereus group</taxon>
    </lineage>
</organism>
<name>TATA_BACC4</name>
<proteinExistence type="inferred from homology"/>
<gene>
    <name evidence="1" type="primary">tatA</name>
    <name type="ordered locus">BCB4264_A2225</name>
</gene>